<evidence type="ECO:0000255" key="1">
    <source>
        <dbReference type="HAMAP-Rule" id="MF_00029"/>
    </source>
</evidence>
<evidence type="ECO:0000305" key="2"/>
<keyword id="KW-1185">Reference proteome</keyword>
<keyword id="KW-0687">Ribonucleoprotein</keyword>
<keyword id="KW-0689">Ribosomal protein</keyword>
<protein>
    <recommendedName>
        <fullName evidence="1">Small ribosomal subunit protein eS8</fullName>
    </recommendedName>
    <alternativeName>
        <fullName evidence="2">30S ribosomal protein S8e</fullName>
    </alternativeName>
</protein>
<sequence>MAIWQGASRRLSTGAKVWRAAKKHKREMGRPAAETQVSDKIKRKIVRCRGANLKVKLEKTNYANVFDQANKVCKKVVVTNVIDNKANKHYIRRNVMTKGAIIETEMGKAKVTSRPGQDGVVNAILLTE</sequence>
<dbReference type="EMBL" id="BX950229">
    <property type="protein sequence ID" value="CAF31214.1"/>
    <property type="molecule type" value="Genomic_DNA"/>
</dbReference>
<dbReference type="RefSeq" id="WP_011171602.1">
    <property type="nucleotide sequence ID" value="NC_005791.1"/>
</dbReference>
<dbReference type="SMR" id="P61300"/>
<dbReference type="STRING" id="267377.MMP1658"/>
<dbReference type="EnsemblBacteria" id="CAF31214">
    <property type="protein sequence ID" value="CAF31214"/>
    <property type="gene ID" value="MMP1658"/>
</dbReference>
<dbReference type="GeneID" id="2761411"/>
<dbReference type="KEGG" id="mmp:MMP1658"/>
<dbReference type="PATRIC" id="fig|267377.15.peg.1697"/>
<dbReference type="eggNOG" id="arCOG04154">
    <property type="taxonomic scope" value="Archaea"/>
</dbReference>
<dbReference type="HOGENOM" id="CLU_080597_2_1_2"/>
<dbReference type="OrthoDB" id="372305at2157"/>
<dbReference type="Proteomes" id="UP000000590">
    <property type="component" value="Chromosome"/>
</dbReference>
<dbReference type="GO" id="GO:1990904">
    <property type="term" value="C:ribonucleoprotein complex"/>
    <property type="evidence" value="ECO:0007669"/>
    <property type="project" value="UniProtKB-KW"/>
</dbReference>
<dbReference type="GO" id="GO:0005840">
    <property type="term" value="C:ribosome"/>
    <property type="evidence" value="ECO:0007669"/>
    <property type="project" value="UniProtKB-KW"/>
</dbReference>
<dbReference type="GO" id="GO:0003735">
    <property type="term" value="F:structural constituent of ribosome"/>
    <property type="evidence" value="ECO:0007669"/>
    <property type="project" value="InterPro"/>
</dbReference>
<dbReference type="GO" id="GO:0006412">
    <property type="term" value="P:translation"/>
    <property type="evidence" value="ECO:0007669"/>
    <property type="project" value="UniProtKB-UniRule"/>
</dbReference>
<dbReference type="CDD" id="cd11382">
    <property type="entry name" value="Ribosomal_S8e"/>
    <property type="match status" value="1"/>
</dbReference>
<dbReference type="FunFam" id="2.40.10.310:FF:000002">
    <property type="entry name" value="30S ribosomal protein S8e"/>
    <property type="match status" value="1"/>
</dbReference>
<dbReference type="Gene3D" id="2.40.10.310">
    <property type="match status" value="1"/>
</dbReference>
<dbReference type="HAMAP" id="MF_00029">
    <property type="entry name" value="Ribosomal_eS8"/>
    <property type="match status" value="1"/>
</dbReference>
<dbReference type="InterPro" id="IPR001047">
    <property type="entry name" value="Ribosomal_eS8"/>
</dbReference>
<dbReference type="InterPro" id="IPR018283">
    <property type="entry name" value="Ribosomal_eS8_CS"/>
</dbReference>
<dbReference type="InterPro" id="IPR020919">
    <property type="entry name" value="Ribosomal_protein_eS8_arc"/>
</dbReference>
<dbReference type="InterPro" id="IPR022309">
    <property type="entry name" value="Ribosomal_Se8/biogenesis_NSA2"/>
</dbReference>
<dbReference type="NCBIfam" id="TIGR00307">
    <property type="entry name" value="eS8"/>
    <property type="match status" value="1"/>
</dbReference>
<dbReference type="PANTHER" id="PTHR10394">
    <property type="entry name" value="40S RIBOSOMAL PROTEIN S8"/>
    <property type="match status" value="1"/>
</dbReference>
<dbReference type="Pfam" id="PF01201">
    <property type="entry name" value="Ribosomal_S8e"/>
    <property type="match status" value="1"/>
</dbReference>
<dbReference type="PROSITE" id="PS01193">
    <property type="entry name" value="RIBOSOMAL_S8E"/>
    <property type="match status" value="1"/>
</dbReference>
<proteinExistence type="inferred from homology"/>
<name>RS8E_METMP</name>
<reference key="1">
    <citation type="journal article" date="2004" name="J. Bacteriol.">
        <title>Complete genome sequence of the genetically tractable hydrogenotrophic methanogen Methanococcus maripaludis.</title>
        <authorList>
            <person name="Hendrickson E.L."/>
            <person name="Kaul R."/>
            <person name="Zhou Y."/>
            <person name="Bovee D."/>
            <person name="Chapman P."/>
            <person name="Chung J."/>
            <person name="Conway de Macario E."/>
            <person name="Dodsworth J.A."/>
            <person name="Gillett W."/>
            <person name="Graham D.E."/>
            <person name="Hackett M."/>
            <person name="Haydock A.K."/>
            <person name="Kang A."/>
            <person name="Land M.L."/>
            <person name="Levy R."/>
            <person name="Lie T.J."/>
            <person name="Major T.A."/>
            <person name="Moore B.C."/>
            <person name="Porat I."/>
            <person name="Palmeiri A."/>
            <person name="Rouse G."/>
            <person name="Saenphimmachak C."/>
            <person name="Soell D."/>
            <person name="Van Dien S."/>
            <person name="Wang T."/>
            <person name="Whitman W.B."/>
            <person name="Xia Q."/>
            <person name="Zhang Y."/>
            <person name="Larimer F.W."/>
            <person name="Olson M.V."/>
            <person name="Leigh J.A."/>
        </authorList>
    </citation>
    <scope>NUCLEOTIDE SEQUENCE [LARGE SCALE GENOMIC DNA]</scope>
    <source>
        <strain>DSM 14266 / JCM 13030 / NBRC 101832 / S2 / LL</strain>
    </source>
</reference>
<gene>
    <name evidence="1" type="primary">rps8e</name>
    <name type="ordered locus">MMP1658</name>
</gene>
<comment type="subunit">
    <text evidence="1">Part of the 30S ribosomal subunit.</text>
</comment>
<comment type="similarity">
    <text evidence="1">Belongs to the eukaryotic ribosomal protein eS8 family.</text>
</comment>
<feature type="chain" id="PRO_0000122270" description="Small ribosomal subunit protein eS8">
    <location>
        <begin position="1"/>
        <end position="128"/>
    </location>
</feature>
<accession>P61300</accession>
<organism>
    <name type="scientific">Methanococcus maripaludis (strain DSM 14266 / JCM 13030 / NBRC 101832 / S2 / LL)</name>
    <dbReference type="NCBI Taxonomy" id="267377"/>
    <lineage>
        <taxon>Archaea</taxon>
        <taxon>Methanobacteriati</taxon>
        <taxon>Methanobacteriota</taxon>
        <taxon>Methanomada group</taxon>
        <taxon>Methanococci</taxon>
        <taxon>Methanococcales</taxon>
        <taxon>Methanococcaceae</taxon>
        <taxon>Methanococcus</taxon>
    </lineage>
</organism>